<feature type="chain" id="PRO_1000076051" description="Deoxyuridine 5'-triphosphate nucleotidohydrolase">
    <location>
        <begin position="1"/>
        <end position="151"/>
    </location>
</feature>
<feature type="binding site" evidence="1">
    <location>
        <begin position="70"/>
        <end position="72"/>
    </location>
    <ligand>
        <name>substrate</name>
    </ligand>
</feature>
<feature type="binding site" evidence="1">
    <location>
        <position position="83"/>
    </location>
    <ligand>
        <name>substrate</name>
    </ligand>
</feature>
<feature type="binding site" evidence="1">
    <location>
        <begin position="87"/>
        <end position="89"/>
    </location>
    <ligand>
        <name>substrate</name>
    </ligand>
</feature>
<feature type="binding site" evidence="1">
    <location>
        <position position="97"/>
    </location>
    <ligand>
        <name>substrate</name>
    </ligand>
</feature>
<comment type="function">
    <text evidence="1">This enzyme is involved in nucleotide metabolism: it produces dUMP, the immediate precursor of thymidine nucleotides and it decreases the intracellular concentration of dUTP so that uracil cannot be incorporated into DNA.</text>
</comment>
<comment type="catalytic activity">
    <reaction evidence="1">
        <text>dUTP + H2O = dUMP + diphosphate + H(+)</text>
        <dbReference type="Rhea" id="RHEA:10248"/>
        <dbReference type="ChEBI" id="CHEBI:15377"/>
        <dbReference type="ChEBI" id="CHEBI:15378"/>
        <dbReference type="ChEBI" id="CHEBI:33019"/>
        <dbReference type="ChEBI" id="CHEBI:61555"/>
        <dbReference type="ChEBI" id="CHEBI:246422"/>
        <dbReference type="EC" id="3.6.1.23"/>
    </reaction>
</comment>
<comment type="cofactor">
    <cofactor evidence="1">
        <name>Mg(2+)</name>
        <dbReference type="ChEBI" id="CHEBI:18420"/>
    </cofactor>
</comment>
<comment type="pathway">
    <text evidence="1">Pyrimidine metabolism; dUMP biosynthesis; dUMP from dCTP (dUTP route): step 2/2.</text>
</comment>
<comment type="similarity">
    <text evidence="1">Belongs to the dUTPase family.</text>
</comment>
<accession>A3N3Q6</accession>
<dbReference type="EC" id="3.6.1.23" evidence="1"/>
<dbReference type="EMBL" id="CP000569">
    <property type="protein sequence ID" value="ABN75042.1"/>
    <property type="molecule type" value="Genomic_DNA"/>
</dbReference>
<dbReference type="RefSeq" id="WP_005606071.1">
    <property type="nucleotide sequence ID" value="NC_009053.1"/>
</dbReference>
<dbReference type="SMR" id="A3N3Q6"/>
<dbReference type="STRING" id="416269.APL_1968"/>
<dbReference type="EnsemblBacteria" id="ABN75042">
    <property type="protein sequence ID" value="ABN75042"/>
    <property type="gene ID" value="APL_1968"/>
</dbReference>
<dbReference type="KEGG" id="apl:APL_1968"/>
<dbReference type="eggNOG" id="COG0756">
    <property type="taxonomic scope" value="Bacteria"/>
</dbReference>
<dbReference type="HOGENOM" id="CLU_068508_1_1_6"/>
<dbReference type="UniPathway" id="UPA00610">
    <property type="reaction ID" value="UER00666"/>
</dbReference>
<dbReference type="Proteomes" id="UP000001432">
    <property type="component" value="Chromosome"/>
</dbReference>
<dbReference type="GO" id="GO:0004170">
    <property type="term" value="F:dUTP diphosphatase activity"/>
    <property type="evidence" value="ECO:0007669"/>
    <property type="project" value="UniProtKB-UniRule"/>
</dbReference>
<dbReference type="GO" id="GO:0000287">
    <property type="term" value="F:magnesium ion binding"/>
    <property type="evidence" value="ECO:0007669"/>
    <property type="project" value="UniProtKB-UniRule"/>
</dbReference>
<dbReference type="GO" id="GO:0006226">
    <property type="term" value="P:dUMP biosynthetic process"/>
    <property type="evidence" value="ECO:0007669"/>
    <property type="project" value="UniProtKB-UniRule"/>
</dbReference>
<dbReference type="GO" id="GO:0046081">
    <property type="term" value="P:dUTP catabolic process"/>
    <property type="evidence" value="ECO:0007669"/>
    <property type="project" value="InterPro"/>
</dbReference>
<dbReference type="CDD" id="cd07557">
    <property type="entry name" value="trimeric_dUTPase"/>
    <property type="match status" value="1"/>
</dbReference>
<dbReference type="FunFam" id="2.70.40.10:FF:000002">
    <property type="entry name" value="dUTP diphosphatase"/>
    <property type="match status" value="1"/>
</dbReference>
<dbReference type="Gene3D" id="2.70.40.10">
    <property type="match status" value="1"/>
</dbReference>
<dbReference type="HAMAP" id="MF_00116">
    <property type="entry name" value="dUTPase_bact"/>
    <property type="match status" value="1"/>
</dbReference>
<dbReference type="InterPro" id="IPR008181">
    <property type="entry name" value="dUTPase"/>
</dbReference>
<dbReference type="InterPro" id="IPR029054">
    <property type="entry name" value="dUTPase-like"/>
</dbReference>
<dbReference type="InterPro" id="IPR036157">
    <property type="entry name" value="dUTPase-like_sf"/>
</dbReference>
<dbReference type="InterPro" id="IPR033704">
    <property type="entry name" value="dUTPase_trimeric"/>
</dbReference>
<dbReference type="NCBIfam" id="TIGR00576">
    <property type="entry name" value="dut"/>
    <property type="match status" value="1"/>
</dbReference>
<dbReference type="NCBIfam" id="NF001862">
    <property type="entry name" value="PRK00601.1"/>
    <property type="match status" value="1"/>
</dbReference>
<dbReference type="PANTHER" id="PTHR11241">
    <property type="entry name" value="DEOXYURIDINE 5'-TRIPHOSPHATE NUCLEOTIDOHYDROLASE"/>
    <property type="match status" value="1"/>
</dbReference>
<dbReference type="PANTHER" id="PTHR11241:SF0">
    <property type="entry name" value="DEOXYURIDINE 5'-TRIPHOSPHATE NUCLEOTIDOHYDROLASE"/>
    <property type="match status" value="1"/>
</dbReference>
<dbReference type="Pfam" id="PF00692">
    <property type="entry name" value="dUTPase"/>
    <property type="match status" value="1"/>
</dbReference>
<dbReference type="SUPFAM" id="SSF51283">
    <property type="entry name" value="dUTPase-like"/>
    <property type="match status" value="1"/>
</dbReference>
<keyword id="KW-0378">Hydrolase</keyword>
<keyword id="KW-0460">Magnesium</keyword>
<keyword id="KW-0479">Metal-binding</keyword>
<keyword id="KW-0546">Nucleotide metabolism</keyword>
<keyword id="KW-1185">Reference proteome</keyword>
<proteinExistence type="inferred from homology"/>
<gene>
    <name evidence="1" type="primary">dut</name>
    <name type="ordered locus">APL_1968</name>
</gene>
<name>DUT_ACTP2</name>
<protein>
    <recommendedName>
        <fullName evidence="1">Deoxyuridine 5'-triphosphate nucleotidohydrolase</fullName>
        <shortName evidence="1">dUTPase</shortName>
        <ecNumber evidence="1">3.6.1.23</ecNumber>
    </recommendedName>
    <alternativeName>
        <fullName evidence="1">dUTP pyrophosphatase</fullName>
    </alternativeName>
</protein>
<sequence length="151" mass="16082">MKQIDLKILDGRIGNEFPLPAYATEGSAGLDLRALTESALTVAPGQTVLIPTGISIYIADPNLAAVILPRSGLGHKNGIVLGNLVGLIDSDYQGPLMVSLWNRSDKPFTVEVGDRIAQLVFVPVVQARFNIVNDFAQTERGEGGFGHSGKQ</sequence>
<reference key="1">
    <citation type="journal article" date="2008" name="J. Bacteriol.">
        <title>The complete genome sequence of Actinobacillus pleuropneumoniae L20 (serotype 5b).</title>
        <authorList>
            <person name="Foote S.J."/>
            <person name="Bosse J.T."/>
            <person name="Bouevitch A.B."/>
            <person name="Langford P.R."/>
            <person name="Young N.M."/>
            <person name="Nash J.H.E."/>
        </authorList>
    </citation>
    <scope>NUCLEOTIDE SEQUENCE [LARGE SCALE GENOMIC DNA]</scope>
    <source>
        <strain>L20</strain>
    </source>
</reference>
<evidence type="ECO:0000255" key="1">
    <source>
        <dbReference type="HAMAP-Rule" id="MF_00116"/>
    </source>
</evidence>
<organism>
    <name type="scientific">Actinobacillus pleuropneumoniae serotype 5b (strain L20)</name>
    <dbReference type="NCBI Taxonomy" id="416269"/>
    <lineage>
        <taxon>Bacteria</taxon>
        <taxon>Pseudomonadati</taxon>
        <taxon>Pseudomonadota</taxon>
        <taxon>Gammaproteobacteria</taxon>
        <taxon>Pasteurellales</taxon>
        <taxon>Pasteurellaceae</taxon>
        <taxon>Actinobacillus</taxon>
    </lineage>
</organism>